<reference key="1">
    <citation type="journal article" date="2001" name="Science">
        <title>Comparative genomics of Listeria species.</title>
        <authorList>
            <person name="Glaser P."/>
            <person name="Frangeul L."/>
            <person name="Buchrieser C."/>
            <person name="Rusniok C."/>
            <person name="Amend A."/>
            <person name="Baquero F."/>
            <person name="Berche P."/>
            <person name="Bloecker H."/>
            <person name="Brandt P."/>
            <person name="Chakraborty T."/>
            <person name="Charbit A."/>
            <person name="Chetouani F."/>
            <person name="Couve E."/>
            <person name="de Daruvar A."/>
            <person name="Dehoux P."/>
            <person name="Domann E."/>
            <person name="Dominguez-Bernal G."/>
            <person name="Duchaud E."/>
            <person name="Durant L."/>
            <person name="Dussurget O."/>
            <person name="Entian K.-D."/>
            <person name="Fsihi H."/>
            <person name="Garcia-del Portillo F."/>
            <person name="Garrido P."/>
            <person name="Gautier L."/>
            <person name="Goebel W."/>
            <person name="Gomez-Lopez N."/>
            <person name="Hain T."/>
            <person name="Hauf J."/>
            <person name="Jackson D."/>
            <person name="Jones L.-M."/>
            <person name="Kaerst U."/>
            <person name="Kreft J."/>
            <person name="Kuhn M."/>
            <person name="Kunst F."/>
            <person name="Kurapkat G."/>
            <person name="Madueno E."/>
            <person name="Maitournam A."/>
            <person name="Mata Vicente J."/>
            <person name="Ng E."/>
            <person name="Nedjari H."/>
            <person name="Nordsiek G."/>
            <person name="Novella S."/>
            <person name="de Pablos B."/>
            <person name="Perez-Diaz J.-C."/>
            <person name="Purcell R."/>
            <person name="Remmel B."/>
            <person name="Rose M."/>
            <person name="Schlueter T."/>
            <person name="Simoes N."/>
            <person name="Tierrez A."/>
            <person name="Vazquez-Boland J.-A."/>
            <person name="Voss H."/>
            <person name="Wehland J."/>
            <person name="Cossart P."/>
        </authorList>
    </citation>
    <scope>NUCLEOTIDE SEQUENCE [LARGE SCALE GENOMIC DNA]</scope>
    <source>
        <strain>ATCC BAA-679 / EGD-e</strain>
    </source>
</reference>
<organism>
    <name type="scientific">Listeria monocytogenes serovar 1/2a (strain ATCC BAA-679 / EGD-e)</name>
    <dbReference type="NCBI Taxonomy" id="169963"/>
    <lineage>
        <taxon>Bacteria</taxon>
        <taxon>Bacillati</taxon>
        <taxon>Bacillota</taxon>
        <taxon>Bacilli</taxon>
        <taxon>Bacillales</taxon>
        <taxon>Listeriaceae</taxon>
        <taxon>Listeria</taxon>
    </lineage>
</organism>
<sequence length="1444" mass="162733">MTAKEEEKQERFQLLMTQIGLQDVTTYEEFTKDAKIEKLVADKKNKTWQFHLHVPQIFPAALFHMMDVGMKRAFSQIAETEMQIVPENQTINETLIQDYWNLIVEPIGKQSPMIGKLLMEQKPTFKEPHFIEVAVHNDMEEATIQQRFQTKIIESYGKAGFPRLAMKMHMLDQSETDEYKAFAQAKQEEDQKKAAEAVQVMQKRQAEGQSGGGGAAPLTGPFQIGYKIKDDEEVKRLGDIYDEERRITVQGLIFATEIRELRSGRSLLQFKITDYTSSMIIKMFSRDNEDAAMFQNLKKGMWVKVRGSVQNDTFVRDLIMMAQDVNEIAGVKRLDTAEEKRAELHLHSPMSQMDATSSVDSLFKQAADWGHKAIAITDHSVAQSFPEAYGAGQKYGLKVIFGIEANLIDDGVPIAYNDQHIALEDATYCVFDVETTGLSAVYDTIIELAGVKMKNGEIIDKFEAFIDPGHPLSATTINLTGITDDMVKGSDPIDVVLKRFKEWSGDDILVAHNASFDMGFINTAYEKVGLEKAENAVVDTLELARFLYPHFKNHRLNTLTKKFNIILEQHHRAVFDAEATAYLAWKLIKDAKEMHNIDFHDSLNDYMGEGDAYKRARPFHATIYAQTAVGLKNLFKLITMSNINYFYRVPRIPRSQLKKLREGLIIGTACSQGELFEAMMQKGMQAAEKVAEFYDFIEVQPKPVYAPLIERELVRDEKALEEILKNIVRVGEKTGKPVVATGNVHYKDPVDKIYRKILIHSQGGANPLNRAELPDVHFRTTDEMLKEFAFLGEEKAKEIVVTNANLVVDWMENLKPIKDELYTPKIDGAEDEVRNMSYAMAHQLYGEKLPEIVEARLEKELKSIIGHGFAVIYLISHKLVKKSLVDGYLVGSRGSVGSSFVATMTEITEVNPLPPHYLCPNCKDSEFFDDGSVGSGFDLPDKDCPHCGTAYQKEGQDIPFETFLGFKGDKVPDIDLNFSGDYQPVAHAYTKEIFGEDYVFRAGTIGTVAEKTAFGYVRNYERDMNMTIRGAEIDRLVAGCTGVKRTTGQHPGGIIVIPDYMDVYDFTPVQFPADATDSEWKTTHFDFHSIHDNVLKLDILGHDDPTAIRMLQDLSGIDPKTIPTDDPDVMKLFGSTESLGVKPADIDSKTGTLGIPEFGTRFVRQMLEQTKPTTFSELVQISGLSHGTDVWLGNAEELIKNKTCELPDVIGCRDDIMVFLIYQGLESSLAFKIMESVRKGKGLTDEMEEAMMANKVPLWYIESCKKIKYMFPKAHAAAYVLMAVRIAYFKVHYPLYFYATYFTVRADDFDLTSMVNGKEAVKATMKEVNDKGMEASTKEKNLLTVLEIANEMLARGFHFQKVDLYKSSADEFIIDGESLIPPFNAIPSLGTNVAKQIVAARENGEFLSKEDLQQRGKVSKTIIQYMDDQGCLEGLPDQNQLSLF</sequence>
<protein>
    <recommendedName>
        <fullName evidence="1">DNA polymerase III PolC-type</fullName>
        <shortName evidence="1">PolIII</shortName>
        <ecNumber evidence="1">2.7.7.7</ecNumber>
    </recommendedName>
</protein>
<dbReference type="EC" id="2.7.7.7" evidence="1"/>
<dbReference type="EMBL" id="AL591978">
    <property type="protein sequence ID" value="CAC99398.1"/>
    <property type="molecule type" value="Genomic_DNA"/>
</dbReference>
<dbReference type="PIR" id="AH1239">
    <property type="entry name" value="AH1239"/>
</dbReference>
<dbReference type="RefSeq" id="NP_464845.1">
    <property type="nucleotide sequence ID" value="NC_003210.1"/>
</dbReference>
<dbReference type="RefSeq" id="WP_010989735.1">
    <property type="nucleotide sequence ID" value="NZ_CP149495.1"/>
</dbReference>
<dbReference type="SMR" id="Q8Y7G1"/>
<dbReference type="STRING" id="169963.gene:17593977"/>
<dbReference type="PaxDb" id="169963-lmo1320"/>
<dbReference type="EnsemblBacteria" id="CAC99398">
    <property type="protein sequence ID" value="CAC99398"/>
    <property type="gene ID" value="CAC99398"/>
</dbReference>
<dbReference type="GeneID" id="987700"/>
<dbReference type="KEGG" id="lmo:lmo1320"/>
<dbReference type="PATRIC" id="fig|169963.11.peg.1357"/>
<dbReference type="eggNOG" id="COG2176">
    <property type="taxonomic scope" value="Bacteria"/>
</dbReference>
<dbReference type="HOGENOM" id="CLU_003297_2_0_9"/>
<dbReference type="OrthoDB" id="9804290at2"/>
<dbReference type="PhylomeDB" id="Q8Y7G1"/>
<dbReference type="BioCyc" id="LMON169963:LMO1320-MONOMER"/>
<dbReference type="Proteomes" id="UP000000817">
    <property type="component" value="Chromosome"/>
</dbReference>
<dbReference type="GO" id="GO:0005737">
    <property type="term" value="C:cytoplasm"/>
    <property type="evidence" value="ECO:0007669"/>
    <property type="project" value="UniProtKB-SubCell"/>
</dbReference>
<dbReference type="GO" id="GO:0008408">
    <property type="term" value="F:3'-5' exonuclease activity"/>
    <property type="evidence" value="ECO:0007669"/>
    <property type="project" value="UniProtKB-UniRule"/>
</dbReference>
<dbReference type="GO" id="GO:0003677">
    <property type="term" value="F:DNA binding"/>
    <property type="evidence" value="ECO:0007669"/>
    <property type="project" value="UniProtKB-UniRule"/>
</dbReference>
<dbReference type="GO" id="GO:0003887">
    <property type="term" value="F:DNA-directed DNA polymerase activity"/>
    <property type="evidence" value="ECO:0000318"/>
    <property type="project" value="GO_Central"/>
</dbReference>
<dbReference type="GO" id="GO:0006261">
    <property type="term" value="P:DNA-templated DNA replication"/>
    <property type="evidence" value="ECO:0007669"/>
    <property type="project" value="UniProtKB-UniRule"/>
</dbReference>
<dbReference type="CDD" id="cd06127">
    <property type="entry name" value="DEDDh"/>
    <property type="match status" value="1"/>
</dbReference>
<dbReference type="CDD" id="cd07435">
    <property type="entry name" value="PHP_PolIIIA_POLC"/>
    <property type="match status" value="1"/>
</dbReference>
<dbReference type="CDD" id="cd04484">
    <property type="entry name" value="polC_OBF"/>
    <property type="match status" value="1"/>
</dbReference>
<dbReference type="FunFam" id="3.30.420.10:FF:000045">
    <property type="entry name" value="3'-5' exonuclease DinG"/>
    <property type="match status" value="1"/>
</dbReference>
<dbReference type="Gene3D" id="1.10.150.870">
    <property type="match status" value="1"/>
</dbReference>
<dbReference type="Gene3D" id="3.30.1900.20">
    <property type="match status" value="2"/>
</dbReference>
<dbReference type="Gene3D" id="6.10.140.1510">
    <property type="match status" value="1"/>
</dbReference>
<dbReference type="Gene3D" id="3.20.20.140">
    <property type="entry name" value="Metal-dependent hydrolases"/>
    <property type="match status" value="1"/>
</dbReference>
<dbReference type="Gene3D" id="2.40.50.140">
    <property type="entry name" value="Nucleic acid-binding proteins"/>
    <property type="match status" value="1"/>
</dbReference>
<dbReference type="Gene3D" id="1.10.150.700">
    <property type="entry name" value="PolC, middle finger domain"/>
    <property type="match status" value="1"/>
</dbReference>
<dbReference type="Gene3D" id="3.30.420.10">
    <property type="entry name" value="Ribonuclease H-like superfamily/Ribonuclease H"/>
    <property type="match status" value="1"/>
</dbReference>
<dbReference type="HAMAP" id="MF_00356">
    <property type="entry name" value="DNApol_PolC"/>
    <property type="match status" value="1"/>
</dbReference>
<dbReference type="InterPro" id="IPR011708">
    <property type="entry name" value="DNA_pol3_alpha_NTPase_dom"/>
</dbReference>
<dbReference type="InterPro" id="IPR040982">
    <property type="entry name" value="DNA_pol3_finger"/>
</dbReference>
<dbReference type="InterPro" id="IPR024754">
    <property type="entry name" value="DNA_PolC-like_N_II"/>
</dbReference>
<dbReference type="InterPro" id="IPR028112">
    <property type="entry name" value="DNA_PolC-type_N_I"/>
</dbReference>
<dbReference type="InterPro" id="IPR004805">
    <property type="entry name" value="DnaE2/DnaE/PolC"/>
</dbReference>
<dbReference type="InterPro" id="IPR029460">
    <property type="entry name" value="DNAPol_HHH"/>
</dbReference>
<dbReference type="InterPro" id="IPR006054">
    <property type="entry name" value="DnaQ"/>
</dbReference>
<dbReference type="InterPro" id="IPR013520">
    <property type="entry name" value="Exonuclease_RNaseT/DNA_pol3"/>
</dbReference>
<dbReference type="InterPro" id="IPR012340">
    <property type="entry name" value="NA-bd_OB-fold"/>
</dbReference>
<dbReference type="InterPro" id="IPR004365">
    <property type="entry name" value="NA-bd_OB_tRNA"/>
</dbReference>
<dbReference type="InterPro" id="IPR004013">
    <property type="entry name" value="PHP_dom"/>
</dbReference>
<dbReference type="InterPro" id="IPR003141">
    <property type="entry name" value="Pol/His_phosphatase_N"/>
</dbReference>
<dbReference type="InterPro" id="IPR006308">
    <property type="entry name" value="Pol_III_a_PolC-type_gram_pos"/>
</dbReference>
<dbReference type="InterPro" id="IPR044923">
    <property type="entry name" value="PolC_middle_finger_sf"/>
</dbReference>
<dbReference type="InterPro" id="IPR012337">
    <property type="entry name" value="RNaseH-like_sf"/>
</dbReference>
<dbReference type="InterPro" id="IPR036397">
    <property type="entry name" value="RNaseH_sf"/>
</dbReference>
<dbReference type="NCBIfam" id="TIGR00573">
    <property type="entry name" value="dnaq"/>
    <property type="match status" value="1"/>
</dbReference>
<dbReference type="NCBIfam" id="TIGR01405">
    <property type="entry name" value="polC_Gram_pos"/>
    <property type="match status" value="1"/>
</dbReference>
<dbReference type="NCBIfam" id="NF001688">
    <property type="entry name" value="PRK00448.1"/>
    <property type="match status" value="1"/>
</dbReference>
<dbReference type="PANTHER" id="PTHR32294:SF5">
    <property type="entry name" value="DNA POLYMERASE III POLC-TYPE"/>
    <property type="match status" value="1"/>
</dbReference>
<dbReference type="PANTHER" id="PTHR32294">
    <property type="entry name" value="DNA POLYMERASE III SUBUNIT ALPHA"/>
    <property type="match status" value="1"/>
</dbReference>
<dbReference type="Pfam" id="PF14480">
    <property type="entry name" value="DNA_pol3_a_NI"/>
    <property type="match status" value="1"/>
</dbReference>
<dbReference type="Pfam" id="PF11490">
    <property type="entry name" value="DNA_pol3_a_NII"/>
    <property type="match status" value="1"/>
</dbReference>
<dbReference type="Pfam" id="PF07733">
    <property type="entry name" value="DNA_pol3_alpha"/>
    <property type="match status" value="2"/>
</dbReference>
<dbReference type="Pfam" id="PF17657">
    <property type="entry name" value="DNA_pol3_finger"/>
    <property type="match status" value="1"/>
</dbReference>
<dbReference type="Pfam" id="PF14579">
    <property type="entry name" value="HHH_6"/>
    <property type="match status" value="1"/>
</dbReference>
<dbReference type="Pfam" id="PF02811">
    <property type="entry name" value="PHP"/>
    <property type="match status" value="1"/>
</dbReference>
<dbReference type="Pfam" id="PF00929">
    <property type="entry name" value="RNase_T"/>
    <property type="match status" value="1"/>
</dbReference>
<dbReference type="Pfam" id="PF01336">
    <property type="entry name" value="tRNA_anti-codon"/>
    <property type="match status" value="1"/>
</dbReference>
<dbReference type="SMART" id="SM00479">
    <property type="entry name" value="EXOIII"/>
    <property type="match status" value="1"/>
</dbReference>
<dbReference type="SMART" id="SM00481">
    <property type="entry name" value="POLIIIAc"/>
    <property type="match status" value="1"/>
</dbReference>
<dbReference type="SUPFAM" id="SSF50249">
    <property type="entry name" value="Nucleic acid-binding proteins"/>
    <property type="match status" value="1"/>
</dbReference>
<dbReference type="SUPFAM" id="SSF53098">
    <property type="entry name" value="Ribonuclease H-like"/>
    <property type="match status" value="1"/>
</dbReference>
<evidence type="ECO:0000255" key="1">
    <source>
        <dbReference type="HAMAP-Rule" id="MF_00356"/>
    </source>
</evidence>
<gene>
    <name evidence="1" type="primary">polC</name>
    <name type="ordered locus">lmo1320</name>
</gene>
<name>DPO3_LISMO</name>
<keyword id="KW-0963">Cytoplasm</keyword>
<keyword id="KW-0235">DNA replication</keyword>
<keyword id="KW-0239">DNA-directed DNA polymerase</keyword>
<keyword id="KW-0269">Exonuclease</keyword>
<keyword id="KW-0378">Hydrolase</keyword>
<keyword id="KW-0540">Nuclease</keyword>
<keyword id="KW-0548">Nucleotidyltransferase</keyword>
<keyword id="KW-1185">Reference proteome</keyword>
<keyword id="KW-0808">Transferase</keyword>
<feature type="chain" id="PRO_0000204581" description="DNA polymerase III PolC-type">
    <location>
        <begin position="1"/>
        <end position="1444"/>
    </location>
</feature>
<feature type="domain" description="Exonuclease">
    <location>
        <begin position="428"/>
        <end position="584"/>
    </location>
</feature>
<accession>Q8Y7G1</accession>
<proteinExistence type="inferred from homology"/>
<comment type="function">
    <text evidence="1">Required for replicative DNA synthesis. This DNA polymerase also exhibits 3' to 5' exonuclease activity.</text>
</comment>
<comment type="catalytic activity">
    <reaction evidence="1">
        <text>DNA(n) + a 2'-deoxyribonucleoside 5'-triphosphate = DNA(n+1) + diphosphate</text>
        <dbReference type="Rhea" id="RHEA:22508"/>
        <dbReference type="Rhea" id="RHEA-COMP:17339"/>
        <dbReference type="Rhea" id="RHEA-COMP:17340"/>
        <dbReference type="ChEBI" id="CHEBI:33019"/>
        <dbReference type="ChEBI" id="CHEBI:61560"/>
        <dbReference type="ChEBI" id="CHEBI:173112"/>
        <dbReference type="EC" id="2.7.7.7"/>
    </reaction>
</comment>
<comment type="subcellular location">
    <subcellularLocation>
        <location evidence="1">Cytoplasm</location>
    </subcellularLocation>
</comment>
<comment type="similarity">
    <text evidence="1">Belongs to the DNA polymerase type-C family. PolC subfamily.</text>
</comment>